<dbReference type="EC" id="6.1.1.9" evidence="1"/>
<dbReference type="EMBL" id="AE017125">
    <property type="protein sequence ID" value="AAP77530.1"/>
    <property type="molecule type" value="Genomic_DNA"/>
</dbReference>
<dbReference type="RefSeq" id="WP_011115773.1">
    <property type="nucleotide sequence ID" value="NC_004917.1"/>
</dbReference>
<dbReference type="SMR" id="Q7VHN2"/>
<dbReference type="STRING" id="235279.HH_0933"/>
<dbReference type="KEGG" id="hhe:HH_0933"/>
<dbReference type="eggNOG" id="COG0525">
    <property type="taxonomic scope" value="Bacteria"/>
</dbReference>
<dbReference type="HOGENOM" id="CLU_001493_0_2_7"/>
<dbReference type="OrthoDB" id="9810365at2"/>
<dbReference type="Proteomes" id="UP000002495">
    <property type="component" value="Chromosome"/>
</dbReference>
<dbReference type="GO" id="GO:0005829">
    <property type="term" value="C:cytosol"/>
    <property type="evidence" value="ECO:0007669"/>
    <property type="project" value="TreeGrafter"/>
</dbReference>
<dbReference type="GO" id="GO:0002161">
    <property type="term" value="F:aminoacyl-tRNA deacylase activity"/>
    <property type="evidence" value="ECO:0007669"/>
    <property type="project" value="InterPro"/>
</dbReference>
<dbReference type="GO" id="GO:0005524">
    <property type="term" value="F:ATP binding"/>
    <property type="evidence" value="ECO:0007669"/>
    <property type="project" value="UniProtKB-UniRule"/>
</dbReference>
<dbReference type="GO" id="GO:0004832">
    <property type="term" value="F:valine-tRNA ligase activity"/>
    <property type="evidence" value="ECO:0007669"/>
    <property type="project" value="UniProtKB-UniRule"/>
</dbReference>
<dbReference type="GO" id="GO:0006438">
    <property type="term" value="P:valyl-tRNA aminoacylation"/>
    <property type="evidence" value="ECO:0007669"/>
    <property type="project" value="UniProtKB-UniRule"/>
</dbReference>
<dbReference type="CDD" id="cd07962">
    <property type="entry name" value="Anticodon_Ia_Val"/>
    <property type="match status" value="1"/>
</dbReference>
<dbReference type="CDD" id="cd00817">
    <property type="entry name" value="ValRS_core"/>
    <property type="match status" value="1"/>
</dbReference>
<dbReference type="FunFam" id="3.40.50.620:FF:000382">
    <property type="entry name" value="Valine--tRNA ligase"/>
    <property type="match status" value="1"/>
</dbReference>
<dbReference type="FunFam" id="3.90.740.10:FF:000005">
    <property type="entry name" value="Valine--tRNA ligase, mitochondrial"/>
    <property type="match status" value="1"/>
</dbReference>
<dbReference type="Gene3D" id="3.40.50.620">
    <property type="entry name" value="HUPs"/>
    <property type="match status" value="3"/>
</dbReference>
<dbReference type="Gene3D" id="1.10.730.10">
    <property type="entry name" value="Isoleucyl-tRNA Synthetase, Domain 1"/>
    <property type="match status" value="1"/>
</dbReference>
<dbReference type="Gene3D" id="1.10.287.380">
    <property type="entry name" value="Valyl-tRNA synthetase, C-terminal domain"/>
    <property type="match status" value="1"/>
</dbReference>
<dbReference type="Gene3D" id="3.90.740.10">
    <property type="entry name" value="Valyl/Leucyl/Isoleucyl-tRNA synthetase, editing domain"/>
    <property type="match status" value="1"/>
</dbReference>
<dbReference type="HAMAP" id="MF_02004">
    <property type="entry name" value="Val_tRNA_synth_type1"/>
    <property type="match status" value="1"/>
</dbReference>
<dbReference type="InterPro" id="IPR001412">
    <property type="entry name" value="aa-tRNA-synth_I_CS"/>
</dbReference>
<dbReference type="InterPro" id="IPR002300">
    <property type="entry name" value="aa-tRNA-synth_Ia"/>
</dbReference>
<dbReference type="InterPro" id="IPR033705">
    <property type="entry name" value="Anticodon_Ia_Val"/>
</dbReference>
<dbReference type="InterPro" id="IPR013155">
    <property type="entry name" value="M/V/L/I-tRNA-synth_anticd-bd"/>
</dbReference>
<dbReference type="InterPro" id="IPR014729">
    <property type="entry name" value="Rossmann-like_a/b/a_fold"/>
</dbReference>
<dbReference type="InterPro" id="IPR010978">
    <property type="entry name" value="tRNA-bd_arm"/>
</dbReference>
<dbReference type="InterPro" id="IPR009080">
    <property type="entry name" value="tRNAsynth_Ia_anticodon-bd"/>
</dbReference>
<dbReference type="InterPro" id="IPR037118">
    <property type="entry name" value="Val-tRNA_synth_C_sf"/>
</dbReference>
<dbReference type="InterPro" id="IPR019499">
    <property type="entry name" value="Val-tRNA_synth_tRNA-bd"/>
</dbReference>
<dbReference type="InterPro" id="IPR009008">
    <property type="entry name" value="Val/Leu/Ile-tRNA-synth_edit"/>
</dbReference>
<dbReference type="InterPro" id="IPR002303">
    <property type="entry name" value="Valyl-tRNA_ligase"/>
</dbReference>
<dbReference type="NCBIfam" id="NF004349">
    <property type="entry name" value="PRK05729.1"/>
    <property type="match status" value="1"/>
</dbReference>
<dbReference type="NCBIfam" id="TIGR00422">
    <property type="entry name" value="valS"/>
    <property type="match status" value="1"/>
</dbReference>
<dbReference type="PANTHER" id="PTHR11946:SF93">
    <property type="entry name" value="VALINE--TRNA LIGASE, CHLOROPLASTIC_MITOCHONDRIAL 2"/>
    <property type="match status" value="1"/>
</dbReference>
<dbReference type="PANTHER" id="PTHR11946">
    <property type="entry name" value="VALYL-TRNA SYNTHETASES"/>
    <property type="match status" value="1"/>
</dbReference>
<dbReference type="Pfam" id="PF08264">
    <property type="entry name" value="Anticodon_1"/>
    <property type="match status" value="1"/>
</dbReference>
<dbReference type="Pfam" id="PF00133">
    <property type="entry name" value="tRNA-synt_1"/>
    <property type="match status" value="1"/>
</dbReference>
<dbReference type="Pfam" id="PF10458">
    <property type="entry name" value="Val_tRNA-synt_C"/>
    <property type="match status" value="1"/>
</dbReference>
<dbReference type="PRINTS" id="PR00986">
    <property type="entry name" value="TRNASYNTHVAL"/>
</dbReference>
<dbReference type="SUPFAM" id="SSF47323">
    <property type="entry name" value="Anticodon-binding domain of a subclass of class I aminoacyl-tRNA synthetases"/>
    <property type="match status" value="1"/>
</dbReference>
<dbReference type="SUPFAM" id="SSF52374">
    <property type="entry name" value="Nucleotidylyl transferase"/>
    <property type="match status" value="1"/>
</dbReference>
<dbReference type="SUPFAM" id="SSF46589">
    <property type="entry name" value="tRNA-binding arm"/>
    <property type="match status" value="1"/>
</dbReference>
<dbReference type="SUPFAM" id="SSF50677">
    <property type="entry name" value="ValRS/IleRS/LeuRS editing domain"/>
    <property type="match status" value="1"/>
</dbReference>
<dbReference type="PROSITE" id="PS00178">
    <property type="entry name" value="AA_TRNA_LIGASE_I"/>
    <property type="match status" value="1"/>
</dbReference>
<comment type="function">
    <text evidence="1">Catalyzes the attachment of valine to tRNA(Val). As ValRS can inadvertently accommodate and process structurally similar amino acids such as threonine, to avoid such errors, it has a 'posttransfer' editing activity that hydrolyzes mischarged Thr-tRNA(Val) in a tRNA-dependent manner.</text>
</comment>
<comment type="catalytic activity">
    <reaction evidence="1">
        <text>tRNA(Val) + L-valine + ATP = L-valyl-tRNA(Val) + AMP + diphosphate</text>
        <dbReference type="Rhea" id="RHEA:10704"/>
        <dbReference type="Rhea" id="RHEA-COMP:9672"/>
        <dbReference type="Rhea" id="RHEA-COMP:9708"/>
        <dbReference type="ChEBI" id="CHEBI:30616"/>
        <dbReference type="ChEBI" id="CHEBI:33019"/>
        <dbReference type="ChEBI" id="CHEBI:57762"/>
        <dbReference type="ChEBI" id="CHEBI:78442"/>
        <dbReference type="ChEBI" id="CHEBI:78537"/>
        <dbReference type="ChEBI" id="CHEBI:456215"/>
        <dbReference type="EC" id="6.1.1.9"/>
    </reaction>
</comment>
<comment type="subunit">
    <text evidence="1">Monomer.</text>
</comment>
<comment type="subcellular location">
    <subcellularLocation>
        <location evidence="1">Cytoplasm</location>
    </subcellularLocation>
</comment>
<comment type="domain">
    <text evidence="1">ValRS has two distinct active sites: one for aminoacylation and one for editing. The misactivated threonine is translocated from the active site to the editing site.</text>
</comment>
<comment type="domain">
    <text evidence="1">The C-terminal coiled-coil domain is crucial for aminoacylation activity.</text>
</comment>
<comment type="similarity">
    <text evidence="1">Belongs to the class-I aminoacyl-tRNA synthetase family. ValS type 1 subfamily.</text>
</comment>
<gene>
    <name evidence="1" type="primary">valS</name>
    <name type="ordered locus">HH_0933</name>
</gene>
<evidence type="ECO:0000255" key="1">
    <source>
        <dbReference type="HAMAP-Rule" id="MF_02004"/>
    </source>
</evidence>
<keyword id="KW-0030">Aminoacyl-tRNA synthetase</keyword>
<keyword id="KW-0067">ATP-binding</keyword>
<keyword id="KW-0175">Coiled coil</keyword>
<keyword id="KW-0963">Cytoplasm</keyword>
<keyword id="KW-0436">Ligase</keyword>
<keyword id="KW-0547">Nucleotide-binding</keyword>
<keyword id="KW-0648">Protein biosynthesis</keyword>
<keyword id="KW-1185">Reference proteome</keyword>
<protein>
    <recommendedName>
        <fullName evidence="1">Valine--tRNA ligase</fullName>
        <ecNumber evidence="1">6.1.1.9</ecNumber>
    </recommendedName>
    <alternativeName>
        <fullName evidence="1">Valyl-tRNA synthetase</fullName>
        <shortName evidence="1">ValRS</shortName>
    </alternativeName>
</protein>
<reference key="1">
    <citation type="journal article" date="2003" name="Proc. Natl. Acad. Sci. U.S.A.">
        <title>The complete genome sequence of the carcinogenic bacterium Helicobacter hepaticus.</title>
        <authorList>
            <person name="Suerbaum S."/>
            <person name="Josenhans C."/>
            <person name="Sterzenbach T."/>
            <person name="Drescher B."/>
            <person name="Brandt P."/>
            <person name="Bell M."/>
            <person name="Droege M."/>
            <person name="Fartmann B."/>
            <person name="Fischer H.-P."/>
            <person name="Ge Z."/>
            <person name="Hoerster A."/>
            <person name="Holland R."/>
            <person name="Klein K."/>
            <person name="Koenig J."/>
            <person name="Macko L."/>
            <person name="Mendz G.L."/>
            <person name="Nyakatura G."/>
            <person name="Schauer D.B."/>
            <person name="Shen Z."/>
            <person name="Weber J."/>
            <person name="Frosch M."/>
            <person name="Fox J.G."/>
        </authorList>
    </citation>
    <scope>NUCLEOTIDE SEQUENCE [LARGE SCALE GENOMIC DNA]</scope>
    <source>
        <strain>ATCC 51449 / 3B1</strain>
    </source>
</reference>
<sequence length="899" mass="102812">MESKAQEKQEQKKGYNPQDIESRFYAICEKRGYFEIEGNKSLWQGCAPKCFSIMMPPPNVTGVLHIGHALTFTLQDIITRFKRMEGFKTLYQPGLDHAGIATQNVVLKQLLAQGITKESLGREAFIAKVWEWKEQSGGEILNQMRHLGITPAWSRLRFTMDKGLQKAVKKAFVQWYNQGLIVQDNYMVNWCVNDGALSDIEVEYEQNHGKLYYLRYPIKDSAQSLIVATTRPETFFGDTGVMVNPNDERYKHLIGKSVILPLLGREIPIIADSHVDMSFGSGCVKVTPAHDMNDYEVGKRHNLPFITIFDEKGIFNKNAGIFQGQERLESRPLIVQKLQENGFVEKIEDYTNQVGKCYRCGNIVEPYISKQWFVKKETAHNAIQRVNNGELHFYPAQWLNNYNAWMRELKDWCISRQLWWGHRIPVWYCECGNKVASESDNPICPQCQSTITKQDEDVLDTWFSSGLWAFSTLGWGNEDTNTQPPLYHANDLAEFYPNSLLITGFDILFFWVARMILSGESLLDSLPFKDVYLHALVRDENGQKMSKSKGNIIDPMEIISSYGADTLRFTLAILCAQGRDVKLSTQSLEISKNFTNKLYNATNFLNMYLEQLGGKEALKKGFGDINHIHINTPLGQYMLVRFYTATNEVRAALENYRFNDGASILYRFLWGEFCDWGIELAKASKDSIYELGAIFKAALILLHPYMPFITDALWHTLNASDIQTSDSIMIHSYPKAMEKNEQHSQLERTFEVIQDVITSIRRLKAMLELGSTNIECIFVKLNAPFEHSLLEQFVCKLAKVKTLCITQQKPKDCVGDVSKYCECYIQLGEIDLQAIGTRLHNQRQKLEKEITKLQAMLGNENFIKNAPKAVMEQNQSALHNAQEKLDKINAELIALGLQS</sequence>
<accession>Q7VHN2</accession>
<feature type="chain" id="PRO_0000224487" description="Valine--tRNA ligase">
    <location>
        <begin position="1"/>
        <end position="899"/>
    </location>
</feature>
<feature type="coiled-coil region" evidence="1">
    <location>
        <begin position="836"/>
        <end position="898"/>
    </location>
</feature>
<feature type="short sequence motif" description="'HIGH' region">
    <location>
        <begin position="58"/>
        <end position="68"/>
    </location>
</feature>
<feature type="short sequence motif" description="'KMSKS' region">
    <location>
        <begin position="544"/>
        <end position="548"/>
    </location>
</feature>
<feature type="binding site" evidence="1">
    <location>
        <position position="547"/>
    </location>
    <ligand>
        <name>ATP</name>
        <dbReference type="ChEBI" id="CHEBI:30616"/>
    </ligand>
</feature>
<proteinExistence type="inferred from homology"/>
<organism>
    <name type="scientific">Helicobacter hepaticus (strain ATCC 51449 / 3B1)</name>
    <dbReference type="NCBI Taxonomy" id="235279"/>
    <lineage>
        <taxon>Bacteria</taxon>
        <taxon>Pseudomonadati</taxon>
        <taxon>Campylobacterota</taxon>
        <taxon>Epsilonproteobacteria</taxon>
        <taxon>Campylobacterales</taxon>
        <taxon>Helicobacteraceae</taxon>
        <taxon>Helicobacter</taxon>
    </lineage>
</organism>
<name>SYV_HELHP</name>